<keyword id="KW-0002">3D-structure</keyword>
<keyword id="KW-0076">Bacteriochlorophyll</keyword>
<keyword id="KW-0148">Chlorophyll</keyword>
<keyword id="KW-0157">Chromophore</keyword>
<keyword id="KW-0903">Direct protein sequencing</keyword>
<keyword id="KW-0249">Electron transport</keyword>
<keyword id="KW-0408">Iron</keyword>
<keyword id="KW-0460">Magnesium</keyword>
<keyword id="KW-0472">Membrane</keyword>
<keyword id="KW-0479">Metal-binding</keyword>
<keyword id="KW-0602">Photosynthesis</keyword>
<keyword id="KW-0674">Reaction center</keyword>
<keyword id="KW-0812">Transmembrane</keyword>
<keyword id="KW-1133">Transmembrane helix</keyword>
<keyword id="KW-0813">Transport</keyword>
<evidence type="ECO:0000250" key="1"/>
<evidence type="ECO:0000269" key="2">
    <source>
    </source>
</evidence>
<evidence type="ECO:0000305" key="3"/>
<evidence type="ECO:0007829" key="4">
    <source>
        <dbReference type="PDB" id="9K3Q"/>
    </source>
</evidence>
<gene>
    <name type="primary">pufM</name>
</gene>
<proteinExistence type="evidence at protein level"/>
<organism>
    <name type="scientific">Rhodospirillum rubrum</name>
    <dbReference type="NCBI Taxonomy" id="1085"/>
    <lineage>
        <taxon>Bacteria</taxon>
        <taxon>Pseudomonadati</taxon>
        <taxon>Pseudomonadota</taxon>
        <taxon>Alphaproteobacteria</taxon>
        <taxon>Rhodospirillales</taxon>
        <taxon>Rhodospirillaceae</taxon>
        <taxon>Rhodospirillum</taxon>
    </lineage>
</organism>
<sequence>MSEYQNILTGVQVRTAPHSAPIAKGIFPRLGKPGFSYWLGKIGDAQIGPIYLGTTGVLSLVFGFFAIEIIGFNLLASVNWSPMEFGRQFFWLGLEPPAAEYGLGFAPLAEGGWWQIAGFFLTTSILLWWVRMYRRARALKMGTHTAWAFASAIFLFLSLGFIRPLLMGNFSESVPFGIFPHLEWTNSFSLNYGNFFYNPFHMLSIAFLYGSALLSAMHGATILAVSRLGGDREVEQITDRGTAAERAALFWRWTMGFNATMESIHRWAWWFAVLCTFTGAIGILLTGTVVDNWFEWGVKHGLAPAP</sequence>
<comment type="function">
    <text>The reaction center is a membrane-bound complex that mediates the initial photochemical event in the electron transfer process of photosynthesis.</text>
</comment>
<comment type="subunit">
    <text>Reaction center is composed of four bacteriochlorophylls, two bacteriopheophytins, two ubiquinones, one iron, and three highly hydrophobic polypeptide chains (designated L, M, and H).</text>
</comment>
<comment type="subcellular location">
    <subcellularLocation>
        <location evidence="1">Cellular chromatophore membrane</location>
        <topology evidence="1">Multi-pass membrane protein</topology>
    </subcellularLocation>
</comment>
<comment type="similarity">
    <text evidence="3">Belongs to the reaction center PufL/M/PsbA/D family.</text>
</comment>
<feature type="initiator methionine" description="Removed" evidence="2">
    <location>
        <position position="1"/>
    </location>
</feature>
<feature type="chain" id="PRO_0000090419" description="Reaction center protein M chain">
    <location>
        <begin position="2"/>
        <end position="306"/>
    </location>
</feature>
<feature type="transmembrane region" description="Helical">
    <location>
        <begin position="53"/>
        <end position="79"/>
    </location>
</feature>
<feature type="transmembrane region" description="Helical">
    <location>
        <begin position="111"/>
        <end position="140"/>
    </location>
</feature>
<feature type="transmembrane region" description="Helical">
    <location>
        <begin position="143"/>
        <end position="168"/>
    </location>
</feature>
<feature type="transmembrane region" description="Helical">
    <location>
        <begin position="198"/>
        <end position="226"/>
    </location>
</feature>
<feature type="transmembrane region" description="Helical">
    <location>
        <begin position="260"/>
        <end position="286"/>
    </location>
</feature>
<feature type="binding site" description="axial binding residue">
    <location>
        <position position="181"/>
    </location>
    <ligand>
        <name>(7R,8Z)-bacteriochlorophyll b</name>
        <dbReference type="ChEBI" id="CHEBI:30034"/>
    </ligand>
    <ligandPart>
        <name>Mg</name>
        <dbReference type="ChEBI" id="CHEBI:25107"/>
    </ligandPart>
</feature>
<feature type="binding site" description="axial binding residue">
    <location>
        <position position="201"/>
    </location>
    <ligand>
        <name>(7R,8Z)-bacteriochlorophyll b</name>
        <dbReference type="ChEBI" id="CHEBI:30034"/>
    </ligand>
    <ligandPart>
        <name>Mg</name>
        <dbReference type="ChEBI" id="CHEBI:25107"/>
    </ligandPart>
</feature>
<feature type="binding site">
    <location>
        <position position="218"/>
    </location>
    <ligand>
        <name>Fe cation</name>
        <dbReference type="ChEBI" id="CHEBI:24875"/>
    </ligand>
</feature>
<feature type="binding site">
    <location>
        <position position="233"/>
    </location>
    <ligand>
        <name>Fe cation</name>
        <dbReference type="ChEBI" id="CHEBI:24875"/>
    </ligand>
</feature>
<feature type="binding site">
    <location>
        <position position="251"/>
    </location>
    <ligand>
        <name>a ubiquinone</name>
        <dbReference type="ChEBI" id="CHEBI:16389"/>
    </ligand>
</feature>
<feature type="binding site">
    <location>
        <position position="265"/>
    </location>
    <ligand>
        <name>Fe cation</name>
        <dbReference type="ChEBI" id="CHEBI:24875"/>
    </ligand>
</feature>
<feature type="helix" evidence="4">
    <location>
        <begin position="53"/>
        <end position="77"/>
    </location>
</feature>
<feature type="turn" evidence="4">
    <location>
        <begin position="78"/>
        <end position="80"/>
    </location>
</feature>
<feature type="helix" evidence="4">
    <location>
        <begin position="82"/>
        <end position="88"/>
    </location>
</feature>
<feature type="turn" evidence="4">
    <location>
        <begin position="89"/>
        <end position="91"/>
    </location>
</feature>
<feature type="helix" evidence="4">
    <location>
        <begin position="99"/>
        <end position="101"/>
    </location>
</feature>
<feature type="helix" evidence="4">
    <location>
        <begin position="108"/>
        <end position="110"/>
    </location>
</feature>
<feature type="helix" evidence="4">
    <location>
        <begin position="112"/>
        <end position="138"/>
    </location>
</feature>
<feature type="helix" evidence="4">
    <location>
        <begin position="144"/>
        <end position="160"/>
    </location>
</feature>
<feature type="helix" evidence="4">
    <location>
        <begin position="162"/>
        <end position="167"/>
    </location>
</feature>
<feature type="helix" evidence="4">
    <location>
        <begin position="178"/>
        <end position="191"/>
    </location>
</feature>
<feature type="helix" evidence="4">
    <location>
        <begin position="195"/>
        <end position="197"/>
    </location>
</feature>
<feature type="helix" evidence="4">
    <location>
        <begin position="199"/>
        <end position="224"/>
    </location>
</feature>
<feature type="helix" evidence="4">
    <location>
        <begin position="226"/>
        <end position="228"/>
    </location>
</feature>
<feature type="turn" evidence="4">
    <location>
        <begin position="229"/>
        <end position="231"/>
    </location>
</feature>
<feature type="helix" evidence="4">
    <location>
        <begin position="233"/>
        <end position="238"/>
    </location>
</feature>
<feature type="helix" evidence="4">
    <location>
        <begin position="242"/>
        <end position="255"/>
    </location>
</feature>
<feature type="helix" evidence="4">
    <location>
        <begin position="263"/>
        <end position="285"/>
    </location>
</feature>
<feature type="turn" evidence="4">
    <location>
        <begin position="287"/>
        <end position="289"/>
    </location>
</feature>
<feature type="helix" evidence="4">
    <location>
        <begin position="293"/>
        <end position="299"/>
    </location>
</feature>
<accession>P10718</accession>
<name>RCEM_RHORU</name>
<dbReference type="EMBL" id="J03731">
    <property type="protein sequence ID" value="AAA26465.1"/>
    <property type="molecule type" value="Genomic_DNA"/>
</dbReference>
<dbReference type="PIR" id="B28170">
    <property type="entry name" value="B28170"/>
</dbReference>
<dbReference type="PDB" id="9K3Q">
    <property type="method" value="EM"/>
    <property type="resolution" value="3.02 A"/>
    <property type="chains" value="M=48-306"/>
</dbReference>
<dbReference type="PDBsum" id="9K3Q"/>
<dbReference type="SMR" id="P10718"/>
<dbReference type="GO" id="GO:0030077">
    <property type="term" value="C:plasma membrane light-harvesting complex"/>
    <property type="evidence" value="ECO:0007669"/>
    <property type="project" value="InterPro"/>
</dbReference>
<dbReference type="GO" id="GO:0042717">
    <property type="term" value="C:plasma membrane-derived chromatophore membrane"/>
    <property type="evidence" value="ECO:0007669"/>
    <property type="project" value="UniProtKB-SubCell"/>
</dbReference>
<dbReference type="GO" id="GO:0042314">
    <property type="term" value="F:bacteriochlorophyll binding"/>
    <property type="evidence" value="ECO:0007669"/>
    <property type="project" value="UniProtKB-KW"/>
</dbReference>
<dbReference type="GO" id="GO:0045156">
    <property type="term" value="F:electron transporter, transferring electrons within the cyclic electron transport pathway of photosynthesis activity"/>
    <property type="evidence" value="ECO:0007669"/>
    <property type="project" value="InterPro"/>
</dbReference>
<dbReference type="GO" id="GO:0046872">
    <property type="term" value="F:metal ion binding"/>
    <property type="evidence" value="ECO:0007669"/>
    <property type="project" value="UniProtKB-KW"/>
</dbReference>
<dbReference type="GO" id="GO:0009772">
    <property type="term" value="P:photosynthetic electron transport in photosystem II"/>
    <property type="evidence" value="ECO:0007669"/>
    <property type="project" value="InterPro"/>
</dbReference>
<dbReference type="CDD" id="cd09291">
    <property type="entry name" value="Photo-RC_M"/>
    <property type="match status" value="1"/>
</dbReference>
<dbReference type="Gene3D" id="1.20.85.10">
    <property type="entry name" value="Photosystem II protein D1-like"/>
    <property type="match status" value="2"/>
</dbReference>
<dbReference type="InterPro" id="IPR036854">
    <property type="entry name" value="Photo_II_D1/D2_sf"/>
</dbReference>
<dbReference type="InterPro" id="IPR000484">
    <property type="entry name" value="Photo_RC_L/M"/>
</dbReference>
<dbReference type="InterPro" id="IPR055265">
    <property type="entry name" value="Photo_RC_L/M_CS"/>
</dbReference>
<dbReference type="InterPro" id="IPR005781">
    <property type="entry name" value="Photo_RC_M"/>
</dbReference>
<dbReference type="NCBIfam" id="TIGR01115">
    <property type="entry name" value="pufM"/>
    <property type="match status" value="1"/>
</dbReference>
<dbReference type="Pfam" id="PF00124">
    <property type="entry name" value="Photo_RC"/>
    <property type="match status" value="1"/>
</dbReference>
<dbReference type="PRINTS" id="PR00256">
    <property type="entry name" value="REACTNCENTRE"/>
</dbReference>
<dbReference type="SUPFAM" id="SSF81483">
    <property type="entry name" value="Bacterial photosystem II reaction centre, L and M subunits"/>
    <property type="match status" value="1"/>
</dbReference>
<dbReference type="PROSITE" id="PS00244">
    <property type="entry name" value="REACTION_CENTER"/>
    <property type="match status" value="1"/>
</dbReference>
<reference key="1">
    <citation type="journal article" date="1988" name="J. Biol. Chem.">
        <title>The structural genes coding for the L and M subunits of Rhodospirillum rubrum photoreaction center.</title>
        <authorList>
            <person name="Belanger G."/>
            <person name="Berard J."/>
            <person name="Corriveau P."/>
            <person name="Gingras G."/>
        </authorList>
    </citation>
    <scope>NUCLEOTIDE SEQUENCE [GENOMIC DNA]</scope>
</reference>
<reference key="2">
    <citation type="journal article" date="1983" name="Hoppe-Seyler's Z. Physiol. Chem.">
        <title>N-terminal sequences of subunits L and M of the photosynthetic reaction centre from Rhodospirillum rubrum G-9+. Separation of the subunits by gel filtration on hydroxypropylated Sephadex G 100 in organic solvents.</title>
        <authorList>
            <person name="Theiler R."/>
            <person name="Suter F."/>
            <person name="Zuber H."/>
        </authorList>
    </citation>
    <scope>PROTEIN SEQUENCE OF 2-51</scope>
</reference>
<protein>
    <recommendedName>
        <fullName>Reaction center protein M chain</fullName>
    </recommendedName>
    <alternativeName>
        <fullName>Photosynthetic reaction center M subunit</fullName>
    </alternativeName>
</protein>